<name>NAGS_NEOFI</name>
<keyword id="KW-0012">Acyltransferase</keyword>
<keyword id="KW-0028">Amino-acid biosynthesis</keyword>
<keyword id="KW-0496">Mitochondrion</keyword>
<keyword id="KW-1185">Reference proteome</keyword>
<keyword id="KW-0808">Transferase</keyword>
<keyword id="KW-0809">Transit peptide</keyword>
<comment type="function">
    <text evidence="1">N-acetylglutamate synthase involved in arginine biosynthesis.</text>
</comment>
<comment type="catalytic activity">
    <reaction>
        <text>L-glutamate + acetyl-CoA = N-acetyl-L-glutamate + CoA + H(+)</text>
        <dbReference type="Rhea" id="RHEA:24292"/>
        <dbReference type="ChEBI" id="CHEBI:15378"/>
        <dbReference type="ChEBI" id="CHEBI:29985"/>
        <dbReference type="ChEBI" id="CHEBI:44337"/>
        <dbReference type="ChEBI" id="CHEBI:57287"/>
        <dbReference type="ChEBI" id="CHEBI:57288"/>
        <dbReference type="EC" id="2.3.1.1"/>
    </reaction>
</comment>
<comment type="pathway">
    <text>Amino-acid biosynthesis; L-arginine biosynthesis; N(2)-acetyl-L-ornithine from L-glutamate: step 1/4.</text>
</comment>
<comment type="subcellular location">
    <subcellularLocation>
        <location evidence="1">Mitochondrion</location>
    </subcellularLocation>
</comment>
<comment type="similarity">
    <text evidence="5">Belongs to the acetyltransferase family.</text>
</comment>
<gene>
    <name type="primary">arg2</name>
    <name type="ORF">NFIA_086740</name>
</gene>
<sequence length="716" mass="78727">MSPHTGWPRTVNSSLLKKHRSSLCTCQHTSSFLPRSFSTTADRHVQQSADFSSTSRSYDRLGRRAKEKLLDREFFLSLLSSASTKREAKSYLARLKAQYPKSPDENKPEPEKLATAPTLPSGVNLGSFYGASRSVYESPVFRQGPSPTAPPSLEPVERLHLALVRLSTPQSLDDNIIDGVAKTLSQLNRLGLTCCVVVDPGTEGVASTLRQVAIEQADRLAVAIQKQPDSKSLRLDSVFSIDASRPGLPQVSSRKALLNPLRHGHTVILTPIAYTEDVPRAIIVPANDAVLALTKELAGLASTPDPDEDPMVTAERIGRLQKEVSLDRVILLDSLGGIPAFNRRQTSHVFINMEQEYDDIENELLQAREMVPATETSLLKAGPSSIADNNPVSKFVNAEVVPVPSGPTQELKTAAPQRSAIEGHLENLRVAQKALTMLPAASSGIITSPFEVASSAQPSPTSEFSAVGTRRQRNPLIHNLLTDKPLLSSSLPMSRRGPTNNGQGTVYPVTSHTTFVKRGMPLTMLPNPWTEPWTPQSRPRLKLDDPSIDLPRLVHLIEDSFDRKLDVQDYLNRVNDRLAGLIIAGEYEGGAILTWELPPGVEDDGSEASNARMVPYLDKFAVLKRSQGAGGVADIVFNAMVRSCFPNGVCWRSRKNNPVNKWYFERSLGTWKLSDTNWTMFWTTPSLVEDSQKFRDYEAVCRSTQPSWADDTGVVD</sequence>
<protein>
    <recommendedName>
        <fullName>Amino-acid acetyltransferase, mitochondrial</fullName>
        <ecNumber>2.3.1.1</ecNumber>
    </recommendedName>
    <alternativeName>
        <fullName>Arginine-requiring protein 2</fullName>
    </alternativeName>
    <alternativeName>
        <fullName>Glutamate N-acetyltransferase</fullName>
    </alternativeName>
    <alternativeName>
        <fullName>N-acetylglutamate synthase</fullName>
        <shortName>AGS</shortName>
        <shortName>NAGS</shortName>
    </alternativeName>
</protein>
<reference key="1">
    <citation type="journal article" date="2008" name="PLoS Genet.">
        <title>Genomic islands in the pathogenic filamentous fungus Aspergillus fumigatus.</title>
        <authorList>
            <person name="Fedorova N.D."/>
            <person name="Khaldi N."/>
            <person name="Joardar V.S."/>
            <person name="Maiti R."/>
            <person name="Amedeo P."/>
            <person name="Anderson M.J."/>
            <person name="Crabtree J."/>
            <person name="Silva J.C."/>
            <person name="Badger J.H."/>
            <person name="Albarraq A."/>
            <person name="Angiuoli S."/>
            <person name="Bussey H."/>
            <person name="Bowyer P."/>
            <person name="Cotty P.J."/>
            <person name="Dyer P.S."/>
            <person name="Egan A."/>
            <person name="Galens K."/>
            <person name="Fraser-Liggett C.M."/>
            <person name="Haas B.J."/>
            <person name="Inman J.M."/>
            <person name="Kent R."/>
            <person name="Lemieux S."/>
            <person name="Malavazi I."/>
            <person name="Orvis J."/>
            <person name="Roemer T."/>
            <person name="Ronning C.M."/>
            <person name="Sundaram J.P."/>
            <person name="Sutton G."/>
            <person name="Turner G."/>
            <person name="Venter J.C."/>
            <person name="White O.R."/>
            <person name="Whitty B.R."/>
            <person name="Youngman P."/>
            <person name="Wolfe K.H."/>
            <person name="Goldman G.H."/>
            <person name="Wortman J.R."/>
            <person name="Jiang B."/>
            <person name="Denning D.W."/>
            <person name="Nierman W.C."/>
        </authorList>
    </citation>
    <scope>NUCLEOTIDE SEQUENCE [LARGE SCALE GENOMIC DNA]</scope>
    <source>
        <strain>ATCC 1020 / DSM 3700 / CBS 544.65 / FGSC A1164 / JCM 1740 / NRRL 181 / WB 181</strain>
    </source>
</reference>
<accession>A1DH62</accession>
<feature type="transit peptide" description="Mitochondrion" evidence="2">
    <location>
        <begin position="1"/>
        <end position="44"/>
    </location>
</feature>
<feature type="chain" id="PRO_0000372568" description="Amino-acid acetyltransferase, mitochondrial">
    <location>
        <begin position="45"/>
        <end position="716"/>
    </location>
</feature>
<feature type="domain" description="N-acetyltransferase" evidence="3">
    <location>
        <begin position="537"/>
        <end position="706"/>
    </location>
</feature>
<feature type="region of interest" description="Disordered" evidence="4">
    <location>
        <begin position="99"/>
        <end position="119"/>
    </location>
</feature>
<feature type="region of interest" description="Disordered" evidence="4">
    <location>
        <begin position="487"/>
        <end position="508"/>
    </location>
</feature>
<feature type="compositionally biased region" description="Basic and acidic residues" evidence="4">
    <location>
        <begin position="102"/>
        <end position="112"/>
    </location>
</feature>
<feature type="compositionally biased region" description="Polar residues" evidence="4">
    <location>
        <begin position="497"/>
        <end position="508"/>
    </location>
</feature>
<organism>
    <name type="scientific">Neosartorya fischeri (strain ATCC 1020 / DSM 3700 / CBS 544.65 / FGSC A1164 / JCM 1740 / NRRL 181 / WB 181)</name>
    <name type="common">Aspergillus fischerianus</name>
    <dbReference type="NCBI Taxonomy" id="331117"/>
    <lineage>
        <taxon>Eukaryota</taxon>
        <taxon>Fungi</taxon>
        <taxon>Dikarya</taxon>
        <taxon>Ascomycota</taxon>
        <taxon>Pezizomycotina</taxon>
        <taxon>Eurotiomycetes</taxon>
        <taxon>Eurotiomycetidae</taxon>
        <taxon>Eurotiales</taxon>
        <taxon>Aspergillaceae</taxon>
        <taxon>Aspergillus</taxon>
        <taxon>Aspergillus subgen. Fumigati</taxon>
    </lineage>
</organism>
<dbReference type="EC" id="2.3.1.1"/>
<dbReference type="EMBL" id="DS027696">
    <property type="protein sequence ID" value="EAW18719.1"/>
    <property type="molecule type" value="Genomic_DNA"/>
</dbReference>
<dbReference type="RefSeq" id="XP_001260616.1">
    <property type="nucleotide sequence ID" value="XM_001260615.1"/>
</dbReference>
<dbReference type="SMR" id="A1DH62"/>
<dbReference type="STRING" id="331117.A1DH62"/>
<dbReference type="EnsemblFungi" id="EAW18719">
    <property type="protein sequence ID" value="EAW18719"/>
    <property type="gene ID" value="NFIA_086740"/>
</dbReference>
<dbReference type="GeneID" id="4587174"/>
<dbReference type="KEGG" id="nfi:NFIA_086740"/>
<dbReference type="VEuPathDB" id="FungiDB:NFIA_086740"/>
<dbReference type="eggNOG" id="KOG2436">
    <property type="taxonomic scope" value="Eukaryota"/>
</dbReference>
<dbReference type="HOGENOM" id="CLU_013088_0_0_1"/>
<dbReference type="OMA" id="NAMVRDC"/>
<dbReference type="OrthoDB" id="5585968at2759"/>
<dbReference type="UniPathway" id="UPA00068">
    <property type="reaction ID" value="UER00106"/>
</dbReference>
<dbReference type="Proteomes" id="UP000006702">
    <property type="component" value="Unassembled WGS sequence"/>
</dbReference>
<dbReference type="GO" id="GO:0005759">
    <property type="term" value="C:mitochondrial matrix"/>
    <property type="evidence" value="ECO:0007669"/>
    <property type="project" value="TreeGrafter"/>
</dbReference>
<dbReference type="GO" id="GO:0004042">
    <property type="term" value="F:L-glutamate N-acetyltransferase activity"/>
    <property type="evidence" value="ECO:0007669"/>
    <property type="project" value="InterPro"/>
</dbReference>
<dbReference type="GO" id="GO:0006526">
    <property type="term" value="P:L-arginine biosynthetic process"/>
    <property type="evidence" value="ECO:0007669"/>
    <property type="project" value="UniProtKB-UniPathway"/>
</dbReference>
<dbReference type="GO" id="GO:0006592">
    <property type="term" value="P:ornithine biosynthetic process"/>
    <property type="evidence" value="ECO:0007669"/>
    <property type="project" value="TreeGrafter"/>
</dbReference>
<dbReference type="FunFam" id="3.40.630.30:FF:000049">
    <property type="entry name" value="Amino-acid acetyltransferase, mitochondrial"/>
    <property type="match status" value="1"/>
</dbReference>
<dbReference type="Gene3D" id="3.40.630.30">
    <property type="match status" value="1"/>
</dbReference>
<dbReference type="InterPro" id="IPR011190">
    <property type="entry name" value="GlcNAc_Synth_fun"/>
</dbReference>
<dbReference type="InterPro" id="IPR006855">
    <property type="entry name" value="Vertebrate-like_GNAT_dom"/>
</dbReference>
<dbReference type="PANTHER" id="PTHR23342:SF4">
    <property type="entry name" value="AMINO-ACID ACETYLTRANSFERASE, MITOCHONDRIAL"/>
    <property type="match status" value="1"/>
</dbReference>
<dbReference type="PANTHER" id="PTHR23342">
    <property type="entry name" value="N-ACETYLGLUTAMATE SYNTHASE"/>
    <property type="match status" value="1"/>
</dbReference>
<dbReference type="Pfam" id="PF04768">
    <property type="entry name" value="NAT"/>
    <property type="match status" value="1"/>
</dbReference>
<dbReference type="PIRSF" id="PIRSF007892">
    <property type="entry name" value="NAGS_fungal"/>
    <property type="match status" value="1"/>
</dbReference>
<dbReference type="PROSITE" id="PS51731">
    <property type="entry name" value="GNAT_NAGS"/>
    <property type="match status" value="1"/>
</dbReference>
<proteinExistence type="inferred from homology"/>
<evidence type="ECO:0000250" key="1"/>
<evidence type="ECO:0000255" key="2"/>
<evidence type="ECO:0000255" key="3">
    <source>
        <dbReference type="PROSITE-ProRule" id="PRU00532"/>
    </source>
</evidence>
<evidence type="ECO:0000256" key="4">
    <source>
        <dbReference type="SAM" id="MobiDB-lite"/>
    </source>
</evidence>
<evidence type="ECO:0000305" key="5"/>